<accession>Q0T8F6</accession>
<evidence type="ECO:0000255" key="1">
    <source>
        <dbReference type="HAMAP-Rule" id="MF_01050"/>
    </source>
</evidence>
<name>CAIB_SHIF8</name>
<comment type="function">
    <text evidence="1">Catalyzes the reversible transfer of the CoA moiety from gamma-butyrobetainyl-CoA to L-carnitine to generate L-carnitinyl-CoA and gamma-butyrobetaine. Is also able to catalyze the reversible transfer of the CoA moiety from gamma-butyrobetainyl-CoA or L-carnitinyl-CoA to crotonobetaine to generate crotonobetainyl-CoA.</text>
</comment>
<comment type="catalytic activity">
    <reaction evidence="1">
        <text>crotonobetainyl-CoA + (R)-carnitine = crotonobetaine + (R)-carnitinyl-CoA</text>
        <dbReference type="Rhea" id="RHEA:28526"/>
        <dbReference type="ChEBI" id="CHEBI:16347"/>
        <dbReference type="ChEBI" id="CHEBI:17237"/>
        <dbReference type="ChEBI" id="CHEBI:60932"/>
        <dbReference type="ChEBI" id="CHEBI:60933"/>
        <dbReference type="EC" id="2.8.3.21"/>
    </reaction>
</comment>
<comment type="catalytic activity">
    <reaction evidence="1">
        <text>4-(trimethylamino)butanoyl-CoA + (R)-carnitine = (R)-carnitinyl-CoA + 4-(trimethylamino)butanoate</text>
        <dbReference type="Rhea" id="RHEA:28418"/>
        <dbReference type="ChEBI" id="CHEBI:16244"/>
        <dbReference type="ChEBI" id="CHEBI:16347"/>
        <dbReference type="ChEBI" id="CHEBI:60932"/>
        <dbReference type="ChEBI" id="CHEBI:61513"/>
        <dbReference type="EC" id="2.8.3.21"/>
    </reaction>
</comment>
<comment type="pathway">
    <text evidence="1">Amine and polyamine metabolism; carnitine metabolism.</text>
</comment>
<comment type="subunit">
    <text evidence="1">Homodimer.</text>
</comment>
<comment type="subcellular location">
    <subcellularLocation>
        <location evidence="1">Cytoplasm</location>
    </subcellularLocation>
</comment>
<comment type="similarity">
    <text evidence="1">Belongs to the CoA-transferase III family. CaiB subfamily.</text>
</comment>
<proteinExistence type="inferred from homology"/>
<protein>
    <recommendedName>
        <fullName evidence="1">L-carnitine CoA-transferase</fullName>
        <ecNumber evidence="1">2.8.3.21</ecNumber>
    </recommendedName>
    <alternativeName>
        <fullName evidence="1">Crotonobetainyl-CoA:carnitine CoA-transferase</fullName>
    </alternativeName>
</protein>
<reference key="1">
    <citation type="journal article" date="2006" name="BMC Genomics">
        <title>Complete genome sequence of Shigella flexneri 5b and comparison with Shigella flexneri 2a.</title>
        <authorList>
            <person name="Nie H."/>
            <person name="Yang F."/>
            <person name="Zhang X."/>
            <person name="Yang J."/>
            <person name="Chen L."/>
            <person name="Wang J."/>
            <person name="Xiong Z."/>
            <person name="Peng J."/>
            <person name="Sun L."/>
            <person name="Dong J."/>
            <person name="Xue Y."/>
            <person name="Xu X."/>
            <person name="Chen S."/>
            <person name="Yao Z."/>
            <person name="Shen Y."/>
            <person name="Jin Q."/>
        </authorList>
    </citation>
    <scope>NUCLEOTIDE SEQUENCE [LARGE SCALE GENOMIC DNA]</scope>
    <source>
        <strain>8401</strain>
    </source>
</reference>
<keyword id="KW-0963">Cytoplasm</keyword>
<keyword id="KW-0808">Transferase</keyword>
<gene>
    <name evidence="1" type="primary">caiB</name>
    <name type="ordered locus">SFV_0032</name>
</gene>
<dbReference type="EC" id="2.8.3.21" evidence="1"/>
<dbReference type="EMBL" id="CP000266">
    <property type="protein sequence ID" value="ABF02320.1"/>
    <property type="molecule type" value="Genomic_DNA"/>
</dbReference>
<dbReference type="RefSeq" id="WP_000349935.1">
    <property type="nucleotide sequence ID" value="NC_008258.1"/>
</dbReference>
<dbReference type="SMR" id="Q0T8F6"/>
<dbReference type="KEGG" id="sfv:SFV_0032"/>
<dbReference type="HOGENOM" id="CLU_033975_2_0_6"/>
<dbReference type="UniPathway" id="UPA00117"/>
<dbReference type="Proteomes" id="UP000000659">
    <property type="component" value="Chromosome"/>
</dbReference>
<dbReference type="GO" id="GO:0005737">
    <property type="term" value="C:cytoplasm"/>
    <property type="evidence" value="ECO:0007669"/>
    <property type="project" value="UniProtKB-SubCell"/>
</dbReference>
<dbReference type="GO" id="GO:0008735">
    <property type="term" value="F:L-carnitine CoA-transferase activity"/>
    <property type="evidence" value="ECO:0007669"/>
    <property type="project" value="RHEA"/>
</dbReference>
<dbReference type="GO" id="GO:0009437">
    <property type="term" value="P:carnitine metabolic process"/>
    <property type="evidence" value="ECO:0007669"/>
    <property type="project" value="UniProtKB-UniRule"/>
</dbReference>
<dbReference type="FunFam" id="3.30.1540.10:FF:000001">
    <property type="entry name" value="L-carnitine CoA-transferase"/>
    <property type="match status" value="1"/>
</dbReference>
<dbReference type="Gene3D" id="3.40.50.10540">
    <property type="entry name" value="Crotonobetainyl-coa:carnitine coa-transferase, domain 1"/>
    <property type="match status" value="1"/>
</dbReference>
<dbReference type="Gene3D" id="3.30.1540.10">
    <property type="entry name" value="formyl-coa transferase, domain 3"/>
    <property type="match status" value="1"/>
</dbReference>
<dbReference type="HAMAP" id="MF_01050">
    <property type="entry name" value="CaiB"/>
    <property type="match status" value="1"/>
</dbReference>
<dbReference type="InterPro" id="IPR050509">
    <property type="entry name" value="CoA-transferase_III"/>
</dbReference>
<dbReference type="InterPro" id="IPR023452">
    <property type="entry name" value="CoA-Trfase_CaiB"/>
</dbReference>
<dbReference type="InterPro" id="IPR003673">
    <property type="entry name" value="CoA-Trfase_fam_III"/>
</dbReference>
<dbReference type="InterPro" id="IPR044855">
    <property type="entry name" value="CoA-Trfase_III_dom3_sf"/>
</dbReference>
<dbReference type="InterPro" id="IPR023606">
    <property type="entry name" value="CoA-Trfase_III_dom_1_sf"/>
</dbReference>
<dbReference type="NCBIfam" id="NF002914">
    <property type="entry name" value="PRK03525.1"/>
    <property type="match status" value="1"/>
</dbReference>
<dbReference type="PANTHER" id="PTHR48228:SF6">
    <property type="entry name" value="L-CARNITINE COA-TRANSFERASE"/>
    <property type="match status" value="1"/>
</dbReference>
<dbReference type="PANTHER" id="PTHR48228">
    <property type="entry name" value="SUCCINYL-COA--D-CITRAMALATE COA-TRANSFERASE"/>
    <property type="match status" value="1"/>
</dbReference>
<dbReference type="Pfam" id="PF02515">
    <property type="entry name" value="CoA_transf_3"/>
    <property type="match status" value="1"/>
</dbReference>
<dbReference type="SUPFAM" id="SSF89796">
    <property type="entry name" value="CoA-transferase family III (CaiB/BaiF)"/>
    <property type="match status" value="1"/>
</dbReference>
<organism>
    <name type="scientific">Shigella flexneri serotype 5b (strain 8401)</name>
    <dbReference type="NCBI Taxonomy" id="373384"/>
    <lineage>
        <taxon>Bacteria</taxon>
        <taxon>Pseudomonadati</taxon>
        <taxon>Pseudomonadota</taxon>
        <taxon>Gammaproteobacteria</taxon>
        <taxon>Enterobacterales</taxon>
        <taxon>Enterobacteriaceae</taxon>
        <taxon>Shigella</taxon>
    </lineage>
</organism>
<sequence length="405" mass="45096">MDHLPMPKFGPLAGLRVVFSGIEIAGPFAGQMFAEWGAEVIWIENVAWADTIRVQPNYPQLSRRNLHALSLNIFKDEGREAFLKLMETTDIFIEASKGPAFARRGITDEVLWQHNPKLVIAHLSGFGQYGTEEYTNLPAYNTIAQAFSGYLIQNGDVDQPMPAFPYTADYFSGLTATTAALAALHKVRETGKGESIDIAMYEVMLRMGQYFMMDYFNGGEMCPRMSKGKDPYYAGCGLYKCADGYIVMELVGITQIEECFKDIGLAHLLGTPEIPEGTQLIHRIECPYGPLVEEKLDAWLAAHTIAEVKKRFAELNIACAKVLTVPELESNPQYVARESITQWQTMDGRTCKGPNIMPKFKNNPGQIWRGMPSHGMDTAAILKNIGYSENDIQELVSKGLAKVED</sequence>
<feature type="chain" id="PRO_0000300984" description="L-carnitine CoA-transferase">
    <location>
        <begin position="1"/>
        <end position="405"/>
    </location>
</feature>
<feature type="active site" description="Nucleophile" evidence="1">
    <location>
        <position position="169"/>
    </location>
</feature>
<feature type="binding site" evidence="1">
    <location>
        <position position="97"/>
    </location>
    <ligand>
        <name>CoA</name>
        <dbReference type="ChEBI" id="CHEBI:57287"/>
    </ligand>
</feature>
<feature type="binding site" evidence="1">
    <location>
        <position position="104"/>
    </location>
    <ligand>
        <name>CoA</name>
        <dbReference type="ChEBI" id="CHEBI:57287"/>
    </ligand>
</feature>